<organism>
    <name type="scientific">Pseudomonas chlororaphis</name>
    <name type="common">Pseudomonas aureofaciens</name>
    <dbReference type="NCBI Taxonomy" id="333"/>
    <lineage>
        <taxon>Bacteria</taxon>
        <taxon>Pseudomonadati</taxon>
        <taxon>Pseudomonadota</taxon>
        <taxon>Gammaproteobacteria</taxon>
        <taxon>Pseudomonadales</taxon>
        <taxon>Pseudomonadaceae</taxon>
        <taxon>Pseudomonas</taxon>
    </lineage>
</organism>
<comment type="function">
    <text>Required for the synthesis of a yet unknown N-aceyl-homoserine lactone (N-aceyl-HSL), an autoinducer molecule which binds to PhzR and thus regulates phenazine production.</text>
</comment>
<comment type="catalytic activity">
    <reaction>
        <text>a fatty acyl-[ACP] + S-adenosyl-L-methionine = an N-acyl-L-homoserine lactone + S-methyl-5'-thioadenosine + holo-[ACP] + H(+)</text>
        <dbReference type="Rhea" id="RHEA:10096"/>
        <dbReference type="Rhea" id="RHEA-COMP:9685"/>
        <dbReference type="Rhea" id="RHEA-COMP:14125"/>
        <dbReference type="ChEBI" id="CHEBI:15378"/>
        <dbReference type="ChEBI" id="CHEBI:17509"/>
        <dbReference type="ChEBI" id="CHEBI:55474"/>
        <dbReference type="ChEBI" id="CHEBI:59789"/>
        <dbReference type="ChEBI" id="CHEBI:64479"/>
        <dbReference type="ChEBI" id="CHEBI:138651"/>
        <dbReference type="EC" id="2.3.1.184"/>
    </reaction>
</comment>
<comment type="similarity">
    <text evidence="1">Belongs to the autoinducer synthase family.</text>
</comment>
<proteinExistence type="inferred from homology"/>
<keyword id="KW-0045">Antibiotic biosynthesis</keyword>
<keyword id="KW-0071">Autoinducer synthesis</keyword>
<keyword id="KW-0673">Quorum sensing</keyword>
<keyword id="KW-0949">S-adenosyl-L-methionine</keyword>
<keyword id="KW-0808">Transferase</keyword>
<reference key="1">
    <citation type="journal article" date="1996" name="Gene">
        <title>The phzI gene of Pseudomonas aureofaciens 30-84 is responsible for the production of a diffusible signal required for phenazine antibiotic production.</title>
        <authorList>
            <person name="Wood D.W."/>
            <person name="Pierson L.S. III"/>
        </authorList>
    </citation>
    <scope>NUCLEOTIDE SEQUENCE [GENOMIC DNA]</scope>
    <source>
        <strain>30-84</strain>
    </source>
</reference>
<sequence length="196" mass="22331">MHMEEHTLNQMSDELKLMLGRFRHEQFVEKLGWRLPAHPSQAGCEWDQYDTEHARYLLAFNEDRAIVGCARLIPTTFPNLLEGVFGHTCAGAPPKHPAIWEMTRFTTREPQLAMPLFWRSLKTASLAGADAIVGIVNSTMERYYKINGVHYERLGPVTVHQNEKILAIKLSAHREHHRSAVAPSAFMSDTLLRETA</sequence>
<feature type="chain" id="PRO_0000210890" description="Acyl-homoserine-lactone synthase">
    <location>
        <begin position="1"/>
        <end position="196"/>
    </location>
</feature>
<evidence type="ECO:0000255" key="1">
    <source>
        <dbReference type="PROSITE-ProRule" id="PRU00533"/>
    </source>
</evidence>
<dbReference type="EC" id="2.3.1.184"/>
<dbReference type="EMBL" id="L33724">
    <property type="protein sequence ID" value="AAC41535.1"/>
    <property type="molecule type" value="Genomic_DNA"/>
</dbReference>
<dbReference type="SMR" id="Q51522"/>
<dbReference type="GO" id="GO:0061579">
    <property type="term" value="F:N-acyl homoserine lactone synthase activity"/>
    <property type="evidence" value="ECO:0007669"/>
    <property type="project" value="UniProtKB-EC"/>
</dbReference>
<dbReference type="GO" id="GO:0017000">
    <property type="term" value="P:antibiotic biosynthetic process"/>
    <property type="evidence" value="ECO:0007669"/>
    <property type="project" value="UniProtKB-KW"/>
</dbReference>
<dbReference type="GO" id="GO:0009372">
    <property type="term" value="P:quorum sensing"/>
    <property type="evidence" value="ECO:0007669"/>
    <property type="project" value="UniProtKB-KW"/>
</dbReference>
<dbReference type="GO" id="GO:0007165">
    <property type="term" value="P:signal transduction"/>
    <property type="evidence" value="ECO:0007669"/>
    <property type="project" value="TreeGrafter"/>
</dbReference>
<dbReference type="Gene3D" id="3.40.630.30">
    <property type="match status" value="1"/>
</dbReference>
<dbReference type="InterPro" id="IPR016181">
    <property type="entry name" value="Acyl_CoA_acyltransferase"/>
</dbReference>
<dbReference type="InterPro" id="IPR018311">
    <property type="entry name" value="Autoind_synth_CS"/>
</dbReference>
<dbReference type="InterPro" id="IPR001690">
    <property type="entry name" value="Autoind_synthase"/>
</dbReference>
<dbReference type="PANTHER" id="PTHR39322">
    <property type="entry name" value="ACYL-HOMOSERINE-LACTONE SYNTHASE"/>
    <property type="match status" value="1"/>
</dbReference>
<dbReference type="PANTHER" id="PTHR39322:SF1">
    <property type="entry name" value="ISOVALERYL-HOMOSERINE LACTONE SYNTHASE"/>
    <property type="match status" value="1"/>
</dbReference>
<dbReference type="Pfam" id="PF00765">
    <property type="entry name" value="Autoind_synth"/>
    <property type="match status" value="1"/>
</dbReference>
<dbReference type="PRINTS" id="PR01549">
    <property type="entry name" value="AUTOINDCRSYN"/>
</dbReference>
<dbReference type="SUPFAM" id="SSF55729">
    <property type="entry name" value="Acyl-CoA N-acyltransferases (Nat)"/>
    <property type="match status" value="1"/>
</dbReference>
<dbReference type="PROSITE" id="PS00949">
    <property type="entry name" value="AUTOINDUCER_SYNTH_1"/>
    <property type="match status" value="1"/>
</dbReference>
<dbReference type="PROSITE" id="PS51187">
    <property type="entry name" value="AUTOINDUCER_SYNTH_2"/>
    <property type="match status" value="1"/>
</dbReference>
<gene>
    <name type="primary">phzI</name>
</gene>
<protein>
    <recommendedName>
        <fullName>Acyl-homoserine-lactone synthase</fullName>
        <ecNumber>2.3.1.184</ecNumber>
    </recommendedName>
    <alternativeName>
        <fullName>Autoinducer synthesis protein PhzI</fullName>
    </alternativeName>
</protein>
<name>PHZI_PSECL</name>
<accession>Q51522</accession>